<feature type="signal peptide" evidence="1">
    <location>
        <begin position="1"/>
        <end position="16"/>
    </location>
</feature>
<feature type="chain" id="PRO_0000419641" description="Basic phospholipase A2 homolog Vur-S49">
    <location>
        <begin position="17"/>
        <end position="138"/>
    </location>
</feature>
<feature type="region of interest" description="Important for membrane-damaging activities in eukaryotes and bacteria; heparin-binding" evidence="2">
    <location>
        <begin position="121"/>
        <end position="133"/>
    </location>
</feature>
<feature type="disulfide bond" evidence="2">
    <location>
        <begin position="42"/>
        <end position="131"/>
    </location>
</feature>
<feature type="disulfide bond" evidence="2">
    <location>
        <begin position="44"/>
        <end position="60"/>
    </location>
</feature>
<feature type="disulfide bond" evidence="2">
    <location>
        <begin position="59"/>
        <end position="111"/>
    </location>
</feature>
<feature type="disulfide bond" evidence="2">
    <location>
        <begin position="65"/>
        <end position="138"/>
    </location>
</feature>
<feature type="disulfide bond" evidence="2">
    <location>
        <begin position="66"/>
        <end position="104"/>
    </location>
</feature>
<feature type="disulfide bond" evidence="2">
    <location>
        <begin position="73"/>
        <end position="97"/>
    </location>
</feature>
<feature type="disulfide bond" evidence="2">
    <location>
        <begin position="91"/>
        <end position="102"/>
    </location>
</feature>
<organism>
    <name type="scientific">Vipera renardi</name>
    <name type="common">Steppe viper</name>
    <name type="synonym">Vipera ursinii renardi</name>
    <dbReference type="NCBI Taxonomy" id="927686"/>
    <lineage>
        <taxon>Eukaryota</taxon>
        <taxon>Metazoa</taxon>
        <taxon>Chordata</taxon>
        <taxon>Craniata</taxon>
        <taxon>Vertebrata</taxon>
        <taxon>Euteleostomi</taxon>
        <taxon>Lepidosauria</taxon>
        <taxon>Squamata</taxon>
        <taxon>Bifurcata</taxon>
        <taxon>Unidentata</taxon>
        <taxon>Episquamata</taxon>
        <taxon>Toxicofera</taxon>
        <taxon>Serpentes</taxon>
        <taxon>Colubroidea</taxon>
        <taxon>Viperidae</taxon>
        <taxon>Viperinae</taxon>
        <taxon>Vipera</taxon>
    </lineage>
</organism>
<name>PA2HS_VIPRE</name>
<accession>F8QN50</accession>
<comment type="function">
    <text evidence="3">Snake venom phospholipase A2 homolog that lacks enzymatic activity (PubMed:25522251). Is able to suppress the acetylcholine (ACh)-evoked current mediated by alpha-7 (CHRNA7)-similar nAChRs in L.stagnalis neurons (IC(50)=2.18 uM) (PubMed:25522251). This activity is only partially reversible and seems to be non-competitive (PubMed:25522251).</text>
</comment>
<comment type="subcellular location">
    <subcellularLocation>
        <location evidence="3">Secreted</location>
    </subcellularLocation>
</comment>
<comment type="tissue specificity">
    <text evidence="8">Expressed by the venom gland.</text>
</comment>
<comment type="similarity">
    <text evidence="6">Belongs to the phospholipase A2 family. Group II subfamily. S49 sub-subfamily.</text>
</comment>
<comment type="caution">
    <text evidence="7">This protein is not found in the crude venom.</text>
</comment>
<comment type="caution">
    <text evidence="6">Does not bind calcium as one of the calcium-binding sites is lost (Asp-&gt;Ser in position 64, which corresponds to 'Ser-49' in the current nomenclature).</text>
</comment>
<dbReference type="EMBL" id="GQ304904">
    <property type="protein sequence ID" value="ADG86228.1"/>
    <property type="molecule type" value="mRNA"/>
</dbReference>
<dbReference type="SMR" id="F8QN50"/>
<dbReference type="GO" id="GO:0005576">
    <property type="term" value="C:extracellular region"/>
    <property type="evidence" value="ECO:0007669"/>
    <property type="project" value="UniProtKB-SubCell"/>
</dbReference>
<dbReference type="GO" id="GO:0030550">
    <property type="term" value="F:acetylcholine receptor inhibitor activity"/>
    <property type="evidence" value="ECO:0007669"/>
    <property type="project" value="UniProtKB-KW"/>
</dbReference>
<dbReference type="GO" id="GO:0005509">
    <property type="term" value="F:calcium ion binding"/>
    <property type="evidence" value="ECO:0007669"/>
    <property type="project" value="InterPro"/>
</dbReference>
<dbReference type="GO" id="GO:0047498">
    <property type="term" value="F:calcium-dependent phospholipase A2 activity"/>
    <property type="evidence" value="ECO:0007669"/>
    <property type="project" value="TreeGrafter"/>
</dbReference>
<dbReference type="GO" id="GO:0005543">
    <property type="term" value="F:phospholipid binding"/>
    <property type="evidence" value="ECO:0007669"/>
    <property type="project" value="TreeGrafter"/>
</dbReference>
<dbReference type="GO" id="GO:0090729">
    <property type="term" value="F:toxin activity"/>
    <property type="evidence" value="ECO:0007669"/>
    <property type="project" value="UniProtKB-KW"/>
</dbReference>
<dbReference type="GO" id="GO:0050482">
    <property type="term" value="P:arachidonate secretion"/>
    <property type="evidence" value="ECO:0007669"/>
    <property type="project" value="InterPro"/>
</dbReference>
<dbReference type="GO" id="GO:0016042">
    <property type="term" value="P:lipid catabolic process"/>
    <property type="evidence" value="ECO:0007669"/>
    <property type="project" value="InterPro"/>
</dbReference>
<dbReference type="GO" id="GO:0042130">
    <property type="term" value="P:negative regulation of T cell proliferation"/>
    <property type="evidence" value="ECO:0007669"/>
    <property type="project" value="TreeGrafter"/>
</dbReference>
<dbReference type="GO" id="GO:0006644">
    <property type="term" value="P:phospholipid metabolic process"/>
    <property type="evidence" value="ECO:0007669"/>
    <property type="project" value="InterPro"/>
</dbReference>
<dbReference type="CDD" id="cd00125">
    <property type="entry name" value="PLA2c"/>
    <property type="match status" value="1"/>
</dbReference>
<dbReference type="FunFam" id="1.20.90.10:FF:000001">
    <property type="entry name" value="Basic phospholipase A2 homolog"/>
    <property type="match status" value="1"/>
</dbReference>
<dbReference type="Gene3D" id="1.20.90.10">
    <property type="entry name" value="Phospholipase A2 domain"/>
    <property type="match status" value="1"/>
</dbReference>
<dbReference type="InterPro" id="IPR001211">
    <property type="entry name" value="PLipase_A2"/>
</dbReference>
<dbReference type="InterPro" id="IPR033112">
    <property type="entry name" value="PLipase_A2_Asp_AS"/>
</dbReference>
<dbReference type="InterPro" id="IPR016090">
    <property type="entry name" value="PLipase_A2_dom"/>
</dbReference>
<dbReference type="InterPro" id="IPR036444">
    <property type="entry name" value="PLipase_A2_dom_sf"/>
</dbReference>
<dbReference type="InterPro" id="IPR033113">
    <property type="entry name" value="PLipase_A2_His_AS"/>
</dbReference>
<dbReference type="PANTHER" id="PTHR11716">
    <property type="entry name" value="PHOSPHOLIPASE A2 FAMILY MEMBER"/>
    <property type="match status" value="1"/>
</dbReference>
<dbReference type="PANTHER" id="PTHR11716:SF9">
    <property type="entry name" value="PHOSPHOLIPASE A2, MEMBRANE ASSOCIATED"/>
    <property type="match status" value="1"/>
</dbReference>
<dbReference type="Pfam" id="PF00068">
    <property type="entry name" value="Phospholip_A2_1"/>
    <property type="match status" value="1"/>
</dbReference>
<dbReference type="PRINTS" id="PR00389">
    <property type="entry name" value="PHPHLIPASEA2"/>
</dbReference>
<dbReference type="SMART" id="SM00085">
    <property type="entry name" value="PA2c"/>
    <property type="match status" value="1"/>
</dbReference>
<dbReference type="SUPFAM" id="SSF48619">
    <property type="entry name" value="Phospholipase A2, PLA2"/>
    <property type="match status" value="1"/>
</dbReference>
<dbReference type="PROSITE" id="PS00119">
    <property type="entry name" value="PA2_ASP"/>
    <property type="match status" value="1"/>
</dbReference>
<dbReference type="PROSITE" id="PS00118">
    <property type="entry name" value="PA2_HIS"/>
    <property type="match status" value="1"/>
</dbReference>
<keyword id="KW-0008">Acetylcholine receptor inhibiting toxin</keyword>
<keyword id="KW-1015">Disulfide bond</keyword>
<keyword id="KW-0528">Neurotoxin</keyword>
<keyword id="KW-0629">Postsynaptic neurotoxin</keyword>
<keyword id="KW-0964">Secreted</keyword>
<keyword id="KW-0732">Signal</keyword>
<keyword id="KW-0800">Toxin</keyword>
<reference key="1">
    <citation type="journal article" date="2011" name="Toxicon">
        <title>cDNA cloning, structural, and functional analyses of venom phospholipases A and a Kunitz-type protease inhibitor from steppe viper Vipera ursinii renardi.</title>
        <authorList>
            <person name="Tsai I.-H."/>
            <person name="Wang Y.M."/>
            <person name="Cheng A.C."/>
            <person name="Starkov V."/>
            <person name="Osipov A."/>
            <person name="Nikitin I."/>
            <person name="Makarova Y."/>
            <person name="Ziganshin R."/>
            <person name="Utkin Y."/>
        </authorList>
    </citation>
    <scope>NUCLEOTIDE SEQUENCE [MRNA]</scope>
    <source>
        <tissue>Venom gland</tissue>
    </source>
</reference>
<reference key="2">
    <citation type="journal article" date="2014" name="PLoS ONE">
        <title>Inhibition of nicotinic acetylcholine receptors, a novel facet in the pleiotropic activities of snake venom phospholipases A2.</title>
        <authorList>
            <person name="Vulfius C.A."/>
            <person name="Kasheverov I.E."/>
            <person name="Starkov V.G."/>
            <person name="Osipov A.V."/>
            <person name="Andreeva T.V."/>
            <person name="Filkin S.Y."/>
            <person name="Gorbacheva E.V."/>
            <person name="Astashev M.E."/>
            <person name="Tsetlin V.I."/>
            <person name="Utkin Y.N."/>
        </authorList>
    </citation>
    <scope>FUNCTION</scope>
    <scope>SUBCELLULAR LOCATION</scope>
    <source>
        <tissue>Venom</tissue>
    </source>
</reference>
<protein>
    <recommendedName>
        <fullName evidence="4 5">Basic phospholipase A2 homolog Vur-S49</fullName>
        <shortName>svPLA2 homolog</shortName>
    </recommendedName>
</protein>
<proteinExistence type="evidence at transcript level"/>
<evidence type="ECO:0000250" key="1"/>
<evidence type="ECO:0000250" key="2">
    <source>
        <dbReference type="UniProtKB" id="P24605"/>
    </source>
</evidence>
<evidence type="ECO:0000269" key="3">
    <source>
    </source>
</evidence>
<evidence type="ECO:0000303" key="4">
    <source>
    </source>
</evidence>
<evidence type="ECO:0000303" key="5">
    <source>
    </source>
</evidence>
<evidence type="ECO:0000305" key="6"/>
<evidence type="ECO:0000305" key="7">
    <source>
    </source>
</evidence>
<evidence type="ECO:0000305" key="8">
    <source>
    </source>
</evidence>
<sequence>MRALWIVAVCLIGVEGSMIEFGKMIQEETEKNPITSYSLYGCHCGLGSKGKPKDATDRCCFVHSCCYAKLSDCSPKTNRYEYHRENGTIVCGSSTFCKKQICECDRAAAICFRENLKTYNKKYKVYLRFKCKGVPEKC</sequence>